<name>ISPH_CHLPM</name>
<evidence type="ECO:0000255" key="1">
    <source>
        <dbReference type="HAMAP-Rule" id="MF_00191"/>
    </source>
</evidence>
<proteinExistence type="inferred from homology"/>
<protein>
    <recommendedName>
        <fullName evidence="1">4-hydroxy-3-methylbut-2-enyl diphosphate reductase</fullName>
        <shortName evidence="1">HMBPP reductase</shortName>
        <ecNumber evidence="1">1.17.7.4</ecNumber>
    </recommendedName>
</protein>
<organism>
    <name type="scientific">Chlorobium phaeovibrioides (strain DSM 265 / 1930)</name>
    <name type="common">Prosthecochloris vibrioformis (strain DSM 265)</name>
    <dbReference type="NCBI Taxonomy" id="290318"/>
    <lineage>
        <taxon>Bacteria</taxon>
        <taxon>Pseudomonadati</taxon>
        <taxon>Chlorobiota</taxon>
        <taxon>Chlorobiia</taxon>
        <taxon>Chlorobiales</taxon>
        <taxon>Chlorobiaceae</taxon>
        <taxon>Chlorobium/Pelodictyon group</taxon>
        <taxon>Chlorobium</taxon>
    </lineage>
</organism>
<feature type="chain" id="PRO_1000077523" description="4-hydroxy-3-methylbut-2-enyl diphosphate reductase">
    <location>
        <begin position="1"/>
        <end position="313"/>
    </location>
</feature>
<feature type="active site" description="Proton donor" evidence="1">
    <location>
        <position position="127"/>
    </location>
</feature>
<feature type="binding site" evidence="1">
    <location>
        <position position="13"/>
    </location>
    <ligand>
        <name>[4Fe-4S] cluster</name>
        <dbReference type="ChEBI" id="CHEBI:49883"/>
    </ligand>
</feature>
<feature type="binding site" evidence="1">
    <location>
        <position position="41"/>
    </location>
    <ligand>
        <name>(2E)-4-hydroxy-3-methylbut-2-enyl diphosphate</name>
        <dbReference type="ChEBI" id="CHEBI:128753"/>
    </ligand>
</feature>
<feature type="binding site" evidence="1">
    <location>
        <position position="41"/>
    </location>
    <ligand>
        <name>dimethylallyl diphosphate</name>
        <dbReference type="ChEBI" id="CHEBI:57623"/>
    </ligand>
</feature>
<feature type="binding site" evidence="1">
    <location>
        <position position="41"/>
    </location>
    <ligand>
        <name>isopentenyl diphosphate</name>
        <dbReference type="ChEBI" id="CHEBI:128769"/>
    </ligand>
</feature>
<feature type="binding site" evidence="1">
    <location>
        <position position="75"/>
    </location>
    <ligand>
        <name>(2E)-4-hydroxy-3-methylbut-2-enyl diphosphate</name>
        <dbReference type="ChEBI" id="CHEBI:128753"/>
    </ligand>
</feature>
<feature type="binding site" evidence="1">
    <location>
        <position position="75"/>
    </location>
    <ligand>
        <name>dimethylallyl diphosphate</name>
        <dbReference type="ChEBI" id="CHEBI:57623"/>
    </ligand>
</feature>
<feature type="binding site" evidence="1">
    <location>
        <position position="75"/>
    </location>
    <ligand>
        <name>isopentenyl diphosphate</name>
        <dbReference type="ChEBI" id="CHEBI:128769"/>
    </ligand>
</feature>
<feature type="binding site" evidence="1">
    <location>
        <position position="97"/>
    </location>
    <ligand>
        <name>[4Fe-4S] cluster</name>
        <dbReference type="ChEBI" id="CHEBI:49883"/>
    </ligand>
</feature>
<feature type="binding site" evidence="1">
    <location>
        <position position="125"/>
    </location>
    <ligand>
        <name>(2E)-4-hydroxy-3-methylbut-2-enyl diphosphate</name>
        <dbReference type="ChEBI" id="CHEBI:128753"/>
    </ligand>
</feature>
<feature type="binding site" evidence="1">
    <location>
        <position position="125"/>
    </location>
    <ligand>
        <name>dimethylallyl diphosphate</name>
        <dbReference type="ChEBI" id="CHEBI:57623"/>
    </ligand>
</feature>
<feature type="binding site" evidence="1">
    <location>
        <position position="125"/>
    </location>
    <ligand>
        <name>isopentenyl diphosphate</name>
        <dbReference type="ChEBI" id="CHEBI:128769"/>
    </ligand>
</feature>
<feature type="binding site" evidence="1">
    <location>
        <position position="168"/>
    </location>
    <ligand>
        <name>(2E)-4-hydroxy-3-methylbut-2-enyl diphosphate</name>
        <dbReference type="ChEBI" id="CHEBI:128753"/>
    </ligand>
</feature>
<feature type="binding site" evidence="1">
    <location>
        <position position="218"/>
    </location>
    <ligand>
        <name>[4Fe-4S] cluster</name>
        <dbReference type="ChEBI" id="CHEBI:49883"/>
    </ligand>
</feature>
<feature type="binding site" evidence="1">
    <location>
        <position position="246"/>
    </location>
    <ligand>
        <name>(2E)-4-hydroxy-3-methylbut-2-enyl diphosphate</name>
        <dbReference type="ChEBI" id="CHEBI:128753"/>
    </ligand>
</feature>
<feature type="binding site" evidence="1">
    <location>
        <position position="246"/>
    </location>
    <ligand>
        <name>dimethylallyl diphosphate</name>
        <dbReference type="ChEBI" id="CHEBI:57623"/>
    </ligand>
</feature>
<feature type="binding site" evidence="1">
    <location>
        <position position="246"/>
    </location>
    <ligand>
        <name>isopentenyl diphosphate</name>
        <dbReference type="ChEBI" id="CHEBI:128769"/>
    </ligand>
</feature>
<feature type="binding site" evidence="1">
    <location>
        <position position="247"/>
    </location>
    <ligand>
        <name>(2E)-4-hydroxy-3-methylbut-2-enyl diphosphate</name>
        <dbReference type="ChEBI" id="CHEBI:128753"/>
    </ligand>
</feature>
<feature type="binding site" evidence="1">
    <location>
        <position position="247"/>
    </location>
    <ligand>
        <name>dimethylallyl diphosphate</name>
        <dbReference type="ChEBI" id="CHEBI:57623"/>
    </ligand>
</feature>
<feature type="binding site" evidence="1">
    <location>
        <position position="247"/>
    </location>
    <ligand>
        <name>isopentenyl diphosphate</name>
        <dbReference type="ChEBI" id="CHEBI:128769"/>
    </ligand>
</feature>
<feature type="binding site" evidence="1">
    <location>
        <position position="248"/>
    </location>
    <ligand>
        <name>(2E)-4-hydroxy-3-methylbut-2-enyl diphosphate</name>
        <dbReference type="ChEBI" id="CHEBI:128753"/>
    </ligand>
</feature>
<feature type="binding site" evidence="1">
    <location>
        <position position="248"/>
    </location>
    <ligand>
        <name>dimethylallyl diphosphate</name>
        <dbReference type="ChEBI" id="CHEBI:57623"/>
    </ligand>
</feature>
<feature type="binding site" evidence="1">
    <location>
        <position position="248"/>
    </location>
    <ligand>
        <name>isopentenyl diphosphate</name>
        <dbReference type="ChEBI" id="CHEBI:128769"/>
    </ligand>
</feature>
<feature type="binding site" evidence="1">
    <location>
        <position position="295"/>
    </location>
    <ligand>
        <name>(2E)-4-hydroxy-3-methylbut-2-enyl diphosphate</name>
        <dbReference type="ChEBI" id="CHEBI:128753"/>
    </ligand>
</feature>
<feature type="binding site" evidence="1">
    <location>
        <position position="295"/>
    </location>
    <ligand>
        <name>dimethylallyl diphosphate</name>
        <dbReference type="ChEBI" id="CHEBI:57623"/>
    </ligand>
</feature>
<feature type="binding site" evidence="1">
    <location>
        <position position="295"/>
    </location>
    <ligand>
        <name>isopentenyl diphosphate</name>
        <dbReference type="ChEBI" id="CHEBI:128769"/>
    </ligand>
</feature>
<comment type="function">
    <text evidence="1">Catalyzes the conversion of 1-hydroxy-2-methyl-2-(E)-butenyl 4-diphosphate (HMBPP) into a mixture of isopentenyl diphosphate (IPP) and dimethylallyl diphosphate (DMAPP). Acts in the terminal step of the DOXP/MEP pathway for isoprenoid precursor biosynthesis.</text>
</comment>
<comment type="catalytic activity">
    <reaction evidence="1">
        <text>isopentenyl diphosphate + 2 oxidized [2Fe-2S]-[ferredoxin] + H2O = (2E)-4-hydroxy-3-methylbut-2-enyl diphosphate + 2 reduced [2Fe-2S]-[ferredoxin] + 2 H(+)</text>
        <dbReference type="Rhea" id="RHEA:24488"/>
        <dbReference type="Rhea" id="RHEA-COMP:10000"/>
        <dbReference type="Rhea" id="RHEA-COMP:10001"/>
        <dbReference type="ChEBI" id="CHEBI:15377"/>
        <dbReference type="ChEBI" id="CHEBI:15378"/>
        <dbReference type="ChEBI" id="CHEBI:33737"/>
        <dbReference type="ChEBI" id="CHEBI:33738"/>
        <dbReference type="ChEBI" id="CHEBI:128753"/>
        <dbReference type="ChEBI" id="CHEBI:128769"/>
        <dbReference type="EC" id="1.17.7.4"/>
    </reaction>
</comment>
<comment type="catalytic activity">
    <reaction evidence="1">
        <text>dimethylallyl diphosphate + 2 oxidized [2Fe-2S]-[ferredoxin] + H2O = (2E)-4-hydroxy-3-methylbut-2-enyl diphosphate + 2 reduced [2Fe-2S]-[ferredoxin] + 2 H(+)</text>
        <dbReference type="Rhea" id="RHEA:24825"/>
        <dbReference type="Rhea" id="RHEA-COMP:10000"/>
        <dbReference type="Rhea" id="RHEA-COMP:10001"/>
        <dbReference type="ChEBI" id="CHEBI:15377"/>
        <dbReference type="ChEBI" id="CHEBI:15378"/>
        <dbReference type="ChEBI" id="CHEBI:33737"/>
        <dbReference type="ChEBI" id="CHEBI:33738"/>
        <dbReference type="ChEBI" id="CHEBI:57623"/>
        <dbReference type="ChEBI" id="CHEBI:128753"/>
        <dbReference type="EC" id="1.17.7.4"/>
    </reaction>
</comment>
<comment type="cofactor">
    <cofactor evidence="1">
        <name>[4Fe-4S] cluster</name>
        <dbReference type="ChEBI" id="CHEBI:49883"/>
    </cofactor>
    <text evidence="1">Binds 1 [4Fe-4S] cluster per subunit.</text>
</comment>
<comment type="pathway">
    <text evidence="1">Isoprenoid biosynthesis; dimethylallyl diphosphate biosynthesis; dimethylallyl diphosphate from (2E)-4-hydroxy-3-methylbutenyl diphosphate: step 1/1.</text>
</comment>
<comment type="pathway">
    <text evidence="1">Isoprenoid biosynthesis; isopentenyl diphosphate biosynthesis via DXP pathway; isopentenyl diphosphate from 1-deoxy-D-xylulose 5-phosphate: step 6/6.</text>
</comment>
<comment type="similarity">
    <text evidence="1">Belongs to the IspH family.</text>
</comment>
<reference key="1">
    <citation type="submission" date="2007-03" db="EMBL/GenBank/DDBJ databases">
        <title>Complete sequence of Prosthecochloris vibrioformis DSM 265.</title>
        <authorList>
            <consortium name="US DOE Joint Genome Institute"/>
            <person name="Copeland A."/>
            <person name="Lucas S."/>
            <person name="Lapidus A."/>
            <person name="Barry K."/>
            <person name="Detter J.C."/>
            <person name="Glavina del Rio T."/>
            <person name="Hammon N."/>
            <person name="Israni S."/>
            <person name="Pitluck S."/>
            <person name="Schmutz J."/>
            <person name="Larimer F."/>
            <person name="Land M."/>
            <person name="Hauser L."/>
            <person name="Mikhailova N."/>
            <person name="Li T."/>
            <person name="Overmann J."/>
            <person name="Schuster S.C."/>
            <person name="Bryant D.A."/>
            <person name="Richardson P."/>
        </authorList>
    </citation>
    <scope>NUCLEOTIDE SEQUENCE [LARGE SCALE GENOMIC DNA]</scope>
    <source>
        <strain>DSM 265 / 1930</strain>
    </source>
</reference>
<gene>
    <name evidence="1" type="primary">ispH</name>
    <name type="ordered locus">Cvib_1518</name>
</gene>
<sequence length="313" mass="34900">MKVNLDRNSSGFCFGVQSTINVAEEKLRKEKGLYSLGDVVHNEVEVKRLEALGLITIDTPAFNELKNAPVLIRAHGEPPSTYETANRNNLTLTDTTCPVVAKLQRTASQLNELGYQIIIYGKHLHPEVIGINGHCQNRALIIKHADLSDPEETLPIDLSKKTALISQTTMDVSGFYELKKNLEKLFSKGGRETGPWAEVKSIGEAEPMPEFIFKDTICRQISNRNQKLQDFSRANERIIFVAGKKSSNGQVLYAICKEANPESHFIEDVEELQSEWFTTTQGKTVESIGVCGATSTPMWLLEKVANHIEAHYA</sequence>
<keyword id="KW-0004">4Fe-4S</keyword>
<keyword id="KW-0408">Iron</keyword>
<keyword id="KW-0411">Iron-sulfur</keyword>
<keyword id="KW-0414">Isoprene biosynthesis</keyword>
<keyword id="KW-0479">Metal-binding</keyword>
<keyword id="KW-0560">Oxidoreductase</keyword>
<dbReference type="EC" id="1.17.7.4" evidence="1"/>
<dbReference type="EMBL" id="CP000607">
    <property type="protein sequence ID" value="ABP37529.1"/>
    <property type="molecule type" value="Genomic_DNA"/>
</dbReference>
<dbReference type="SMR" id="A4SGC0"/>
<dbReference type="STRING" id="290318.Cvib_1518"/>
<dbReference type="KEGG" id="pvi:Cvib_1518"/>
<dbReference type="eggNOG" id="COG0761">
    <property type="taxonomic scope" value="Bacteria"/>
</dbReference>
<dbReference type="HOGENOM" id="CLU_027486_0_1_10"/>
<dbReference type="OrthoDB" id="9777362at2"/>
<dbReference type="UniPathway" id="UPA00056">
    <property type="reaction ID" value="UER00097"/>
</dbReference>
<dbReference type="UniPathway" id="UPA00059">
    <property type="reaction ID" value="UER00105"/>
</dbReference>
<dbReference type="GO" id="GO:0051539">
    <property type="term" value="F:4 iron, 4 sulfur cluster binding"/>
    <property type="evidence" value="ECO:0007669"/>
    <property type="project" value="UniProtKB-UniRule"/>
</dbReference>
<dbReference type="GO" id="GO:0051745">
    <property type="term" value="F:4-hydroxy-3-methylbut-2-enyl diphosphate reductase activity"/>
    <property type="evidence" value="ECO:0007669"/>
    <property type="project" value="UniProtKB-UniRule"/>
</dbReference>
<dbReference type="GO" id="GO:0046872">
    <property type="term" value="F:metal ion binding"/>
    <property type="evidence" value="ECO:0007669"/>
    <property type="project" value="UniProtKB-KW"/>
</dbReference>
<dbReference type="GO" id="GO:0050992">
    <property type="term" value="P:dimethylallyl diphosphate biosynthetic process"/>
    <property type="evidence" value="ECO:0007669"/>
    <property type="project" value="UniProtKB-UniRule"/>
</dbReference>
<dbReference type="GO" id="GO:0019288">
    <property type="term" value="P:isopentenyl diphosphate biosynthetic process, methylerythritol 4-phosphate pathway"/>
    <property type="evidence" value="ECO:0007669"/>
    <property type="project" value="UniProtKB-UniRule"/>
</dbReference>
<dbReference type="GO" id="GO:0016114">
    <property type="term" value="P:terpenoid biosynthetic process"/>
    <property type="evidence" value="ECO:0007669"/>
    <property type="project" value="UniProtKB-UniRule"/>
</dbReference>
<dbReference type="CDD" id="cd13944">
    <property type="entry name" value="lytB_ispH"/>
    <property type="match status" value="1"/>
</dbReference>
<dbReference type="Gene3D" id="3.40.50.11270">
    <property type="match status" value="1"/>
</dbReference>
<dbReference type="Gene3D" id="3.40.1010.20">
    <property type="entry name" value="4-hydroxy-3-methylbut-2-enyl diphosphate reductase, catalytic domain"/>
    <property type="match status" value="2"/>
</dbReference>
<dbReference type="HAMAP" id="MF_00191">
    <property type="entry name" value="IspH"/>
    <property type="match status" value="1"/>
</dbReference>
<dbReference type="InterPro" id="IPR003451">
    <property type="entry name" value="LytB/IspH"/>
</dbReference>
<dbReference type="NCBIfam" id="TIGR00216">
    <property type="entry name" value="ispH_lytB"/>
    <property type="match status" value="1"/>
</dbReference>
<dbReference type="NCBIfam" id="NF002187">
    <property type="entry name" value="PRK01045.1-1"/>
    <property type="match status" value="1"/>
</dbReference>
<dbReference type="PANTHER" id="PTHR30426">
    <property type="entry name" value="4-HYDROXY-3-METHYLBUT-2-ENYL DIPHOSPHATE REDUCTASE"/>
    <property type="match status" value="1"/>
</dbReference>
<dbReference type="PANTHER" id="PTHR30426:SF0">
    <property type="entry name" value="4-HYDROXY-3-METHYLBUT-2-ENYL DIPHOSPHATE REDUCTASE"/>
    <property type="match status" value="1"/>
</dbReference>
<dbReference type="Pfam" id="PF02401">
    <property type="entry name" value="LYTB"/>
    <property type="match status" value="1"/>
</dbReference>
<accession>A4SGC0</accession>